<proteinExistence type="inferred from homology"/>
<evidence type="ECO:0000255" key="1">
    <source>
        <dbReference type="HAMAP-Rule" id="MF_00829"/>
    </source>
</evidence>
<organism>
    <name type="scientific">Bacillus anthracis</name>
    <dbReference type="NCBI Taxonomy" id="1392"/>
    <lineage>
        <taxon>Bacteria</taxon>
        <taxon>Bacillati</taxon>
        <taxon>Bacillota</taxon>
        <taxon>Bacilli</taxon>
        <taxon>Bacillales</taxon>
        <taxon>Bacillaceae</taxon>
        <taxon>Bacillus</taxon>
        <taxon>Bacillus cereus group</taxon>
    </lineage>
</organism>
<name>Y406_BACAN</name>
<keyword id="KW-1185">Reference proteome</keyword>
<accession>Q81Z66</accession>
<accession>Q6I408</accession>
<accession>Q6KXR9</accession>
<gene>
    <name type="ordered locus">BA_0406</name>
    <name type="ordered locus">GBAA_0406</name>
    <name type="ordered locus">BAS0392</name>
</gene>
<sequence length="74" mass="8652">MDLSVKSEENVEYMVEAIKEKLRMVNAGAMRAASFNEEMYEDLRDIYEHVMKRETFSISEMQAITEELGTLIKK</sequence>
<reference key="1">
    <citation type="journal article" date="2003" name="Nature">
        <title>The genome sequence of Bacillus anthracis Ames and comparison to closely related bacteria.</title>
        <authorList>
            <person name="Read T.D."/>
            <person name="Peterson S.N."/>
            <person name="Tourasse N.J."/>
            <person name="Baillie L.W."/>
            <person name="Paulsen I.T."/>
            <person name="Nelson K.E."/>
            <person name="Tettelin H."/>
            <person name="Fouts D.E."/>
            <person name="Eisen J.A."/>
            <person name="Gill S.R."/>
            <person name="Holtzapple E.K."/>
            <person name="Okstad O.A."/>
            <person name="Helgason E."/>
            <person name="Rilstone J."/>
            <person name="Wu M."/>
            <person name="Kolonay J.F."/>
            <person name="Beanan M.J."/>
            <person name="Dodson R.J."/>
            <person name="Brinkac L.M."/>
            <person name="Gwinn M.L."/>
            <person name="DeBoy R.T."/>
            <person name="Madpu R."/>
            <person name="Daugherty S.C."/>
            <person name="Durkin A.S."/>
            <person name="Haft D.H."/>
            <person name="Nelson W.C."/>
            <person name="Peterson J.D."/>
            <person name="Pop M."/>
            <person name="Khouri H.M."/>
            <person name="Radune D."/>
            <person name="Benton J.L."/>
            <person name="Mahamoud Y."/>
            <person name="Jiang L."/>
            <person name="Hance I.R."/>
            <person name="Weidman J.F."/>
            <person name="Berry K.J."/>
            <person name="Plaut R.D."/>
            <person name="Wolf A.M."/>
            <person name="Watkins K.L."/>
            <person name="Nierman W.C."/>
            <person name="Hazen A."/>
            <person name="Cline R.T."/>
            <person name="Redmond C."/>
            <person name="Thwaite J.E."/>
            <person name="White O."/>
            <person name="Salzberg S.L."/>
            <person name="Thomason B."/>
            <person name="Friedlander A.M."/>
            <person name="Koehler T.M."/>
            <person name="Hanna P.C."/>
            <person name="Kolstoe A.-B."/>
            <person name="Fraser C.M."/>
        </authorList>
    </citation>
    <scope>NUCLEOTIDE SEQUENCE [LARGE SCALE GENOMIC DNA]</scope>
    <source>
        <strain>Ames / isolate Porton</strain>
    </source>
</reference>
<reference key="2">
    <citation type="submission" date="2004-01" db="EMBL/GenBank/DDBJ databases">
        <title>Complete genome sequence of Bacillus anthracis Sterne.</title>
        <authorList>
            <person name="Brettin T.S."/>
            <person name="Bruce D."/>
            <person name="Challacombe J.F."/>
            <person name="Gilna P."/>
            <person name="Han C."/>
            <person name="Hill K."/>
            <person name="Hitchcock P."/>
            <person name="Jackson P."/>
            <person name="Keim P."/>
            <person name="Longmire J."/>
            <person name="Lucas S."/>
            <person name="Okinaka R."/>
            <person name="Richardson P."/>
            <person name="Rubin E."/>
            <person name="Tice H."/>
        </authorList>
    </citation>
    <scope>NUCLEOTIDE SEQUENCE [LARGE SCALE GENOMIC DNA]</scope>
    <source>
        <strain>Sterne</strain>
    </source>
</reference>
<reference key="3">
    <citation type="journal article" date="2009" name="J. Bacteriol.">
        <title>The complete genome sequence of Bacillus anthracis Ames 'Ancestor'.</title>
        <authorList>
            <person name="Ravel J."/>
            <person name="Jiang L."/>
            <person name="Stanley S.T."/>
            <person name="Wilson M.R."/>
            <person name="Decker R.S."/>
            <person name="Read T.D."/>
            <person name="Worsham P."/>
            <person name="Keim P.S."/>
            <person name="Salzberg S.L."/>
            <person name="Fraser-Liggett C.M."/>
            <person name="Rasko D.A."/>
        </authorList>
    </citation>
    <scope>NUCLEOTIDE SEQUENCE [LARGE SCALE GENOMIC DNA]</scope>
    <source>
        <strain>Ames ancestor</strain>
    </source>
</reference>
<protein>
    <recommendedName>
        <fullName evidence="1">UPF0435 protein BA_0406/GBAA_0406/BAS0392</fullName>
    </recommendedName>
</protein>
<dbReference type="EMBL" id="AE016879">
    <property type="protein sequence ID" value="AAP24436.1"/>
    <property type="molecule type" value="Genomic_DNA"/>
</dbReference>
<dbReference type="EMBL" id="AE017334">
    <property type="protein sequence ID" value="AAT29501.1"/>
    <property type="molecule type" value="Genomic_DNA"/>
</dbReference>
<dbReference type="EMBL" id="AE017225">
    <property type="protein sequence ID" value="AAT52723.1"/>
    <property type="molecule type" value="Genomic_DNA"/>
</dbReference>
<dbReference type="RefSeq" id="NP_842950.1">
    <property type="nucleotide sequence ID" value="NC_003997.3"/>
</dbReference>
<dbReference type="RefSeq" id="WP_000366197.1">
    <property type="nucleotide sequence ID" value="NZ_WXXJ01000001.1"/>
</dbReference>
<dbReference type="RefSeq" id="YP_026672.1">
    <property type="nucleotide sequence ID" value="NC_005945.1"/>
</dbReference>
<dbReference type="SMR" id="Q81Z66"/>
<dbReference type="STRING" id="261594.GBAA_0406"/>
<dbReference type="DNASU" id="1086645"/>
<dbReference type="KEGG" id="ban:BA_0406"/>
<dbReference type="KEGG" id="bar:GBAA_0406"/>
<dbReference type="KEGG" id="bat:BAS0392"/>
<dbReference type="PATRIC" id="fig|198094.11.peg.401"/>
<dbReference type="eggNOG" id="COG4840">
    <property type="taxonomic scope" value="Bacteria"/>
</dbReference>
<dbReference type="HOGENOM" id="CLU_199533_1_0_9"/>
<dbReference type="OMA" id="FSEEWYD"/>
<dbReference type="OrthoDB" id="2361695at2"/>
<dbReference type="Proteomes" id="UP000000427">
    <property type="component" value="Chromosome"/>
</dbReference>
<dbReference type="Proteomes" id="UP000000594">
    <property type="component" value="Chromosome"/>
</dbReference>
<dbReference type="HAMAP" id="MF_00829">
    <property type="entry name" value="UPF0435"/>
    <property type="match status" value="1"/>
</dbReference>
<dbReference type="InterPro" id="IPR009507">
    <property type="entry name" value="UPF0435"/>
</dbReference>
<dbReference type="Pfam" id="PF06569">
    <property type="entry name" value="DUF1128"/>
    <property type="match status" value="1"/>
</dbReference>
<comment type="similarity">
    <text evidence="1">Belongs to the UPF0435 family.</text>
</comment>
<feature type="chain" id="PRO_0000291399" description="UPF0435 protein BA_0406/GBAA_0406/BAS0392">
    <location>
        <begin position="1"/>
        <end position="74"/>
    </location>
</feature>